<keyword id="KW-0998">Cell outer membrane</keyword>
<keyword id="KW-0406">Ion transport</keyword>
<keyword id="KW-0472">Membrane</keyword>
<keyword id="KW-0626">Porin</keyword>
<keyword id="KW-1185">Reference proteome</keyword>
<keyword id="KW-0732">Signal</keyword>
<keyword id="KW-0812">Transmembrane</keyword>
<keyword id="KW-1134">Transmembrane beta strand</keyword>
<keyword id="KW-0813">Transport</keyword>
<feature type="signal peptide" evidence="2">
    <location>
        <begin position="1"/>
        <end position="22"/>
    </location>
</feature>
<feature type="chain" id="PRO_0000354007" description="Porin Omp2a">
    <location>
        <begin position="23"/>
        <end position="321"/>
    </location>
</feature>
<proteinExistence type="inferred from homology"/>
<comment type="function">
    <text evidence="1">Forms passive diffusion pores that allow small molecular weight hydrophilic materials across the outer membrane.</text>
</comment>
<comment type="subunit">
    <text evidence="1">Monomer.</text>
</comment>
<comment type="subcellular location">
    <subcellularLocation>
        <location evidence="1">Cell outer membrane</location>
        <topology evidence="1">Multi-pass membrane protein</topology>
    </subcellularLocation>
</comment>
<comment type="domain">
    <text evidence="1">Consists of 16-stranded beta-barrel sheets, with large surface-exposed loops, that form a transmembrane pore at the center of each barrel. The pore is partially ocluded by a peptide loop that folds into the pore lumen (By similarity).</text>
</comment>
<comment type="miscellaneous">
    <text evidence="1">The pore formed by Omp2a is larger than the one formed by Omp2b. Omp2b pores have optimal permeability to allow growth and protection against harmful compounds. The larger pore formed by Omp2a may be advantageous for intracellular growth, when the bacterium is competing with the host cell for nutrients whose concentration is particularly low within the phagosome.</text>
</comment>
<comment type="similarity">
    <text evidence="3">Belongs to the alphaproteobacteria porin family.</text>
</comment>
<name>OMP2A_BRUA2</name>
<accession>Q2YMY8</accession>
<sequence>MNIKSLLLGSAAALVAASGAQAADAIVAPEPEAVEYVRVCDAYGAGYFYIPGTETCLRVHGYVRYDVKGGDDVYSGTDRNGWDKGARFALMFNTNSETELGTLGTYTQLRFNYTSNNSRHDGQYGDFSDDRDVADGGVSTGKIAYTFTGGNGFSAVIALEQGGEDVDNDYTIDGYMPHVVGGLKYAGGWGSIAGVVAYDSVIEEWATKVRGDVNITDRFSVWLQGAYSSAATPNQNYGQWGGDWAVWGGAKFIAPEKATFNLQAAHDDWGKTAVTANVAYQLVPGFTITPEVSYTKFGGEWKDTVAEDNAWGGIVRFQRSF</sequence>
<reference key="1">
    <citation type="journal article" date="2005" name="Infect. Immun.">
        <title>Whole-genome analyses of speciation events in pathogenic Brucellae.</title>
        <authorList>
            <person name="Chain P.S."/>
            <person name="Comerci D.J."/>
            <person name="Tolmasky M.E."/>
            <person name="Larimer F.W."/>
            <person name="Malfatti S.A."/>
            <person name="Vergez L.M."/>
            <person name="Aguero F."/>
            <person name="Land M.L."/>
            <person name="Ugalde R.A."/>
            <person name="Garcia E."/>
        </authorList>
    </citation>
    <scope>NUCLEOTIDE SEQUENCE [LARGE SCALE GENOMIC DNA]</scope>
    <source>
        <strain>2308</strain>
    </source>
</reference>
<organism>
    <name type="scientific">Brucella abortus (strain 2308)</name>
    <dbReference type="NCBI Taxonomy" id="359391"/>
    <lineage>
        <taxon>Bacteria</taxon>
        <taxon>Pseudomonadati</taxon>
        <taxon>Pseudomonadota</taxon>
        <taxon>Alphaproteobacteria</taxon>
        <taxon>Hyphomicrobiales</taxon>
        <taxon>Brucellaceae</taxon>
        <taxon>Brucella/Ochrobactrum group</taxon>
        <taxon>Brucella</taxon>
    </lineage>
</organism>
<dbReference type="EMBL" id="AM040264">
    <property type="protein sequence ID" value="CAJ10615.1"/>
    <property type="molecule type" value="Genomic_DNA"/>
</dbReference>
<dbReference type="RefSeq" id="WP_002969883.1">
    <property type="nucleotide sequence ID" value="NZ_KN046823.1"/>
</dbReference>
<dbReference type="SMR" id="Q2YMY8"/>
<dbReference type="STRING" id="359391.BAB1_0659"/>
<dbReference type="KEGG" id="bmf:BAB1_0659"/>
<dbReference type="PATRIC" id="fig|359391.11.peg.2973"/>
<dbReference type="HOGENOM" id="CLU_044836_0_0_5"/>
<dbReference type="PhylomeDB" id="Q2YMY8"/>
<dbReference type="Proteomes" id="UP000002719">
    <property type="component" value="Chromosome I"/>
</dbReference>
<dbReference type="GO" id="GO:0009279">
    <property type="term" value="C:cell outer membrane"/>
    <property type="evidence" value="ECO:0007669"/>
    <property type="project" value="UniProtKB-SubCell"/>
</dbReference>
<dbReference type="GO" id="GO:0046930">
    <property type="term" value="C:pore complex"/>
    <property type="evidence" value="ECO:0007669"/>
    <property type="project" value="UniProtKB-KW"/>
</dbReference>
<dbReference type="GO" id="GO:0015288">
    <property type="term" value="F:porin activity"/>
    <property type="evidence" value="ECO:0007669"/>
    <property type="project" value="UniProtKB-KW"/>
</dbReference>
<dbReference type="GO" id="GO:0006811">
    <property type="term" value="P:monoatomic ion transport"/>
    <property type="evidence" value="ECO:0007669"/>
    <property type="project" value="UniProtKB-KW"/>
</dbReference>
<dbReference type="InterPro" id="IPR003684">
    <property type="entry name" value="Porin_alphabac"/>
</dbReference>
<dbReference type="Pfam" id="PF02530">
    <property type="entry name" value="Porin_2"/>
    <property type="match status" value="1"/>
</dbReference>
<evidence type="ECO:0000250" key="1">
    <source>
        <dbReference type="UniProtKB" id="B2SAB9"/>
    </source>
</evidence>
<evidence type="ECO:0000255" key="2"/>
<evidence type="ECO:0000305" key="3"/>
<protein>
    <recommendedName>
        <fullName>Porin Omp2a</fullName>
    </recommendedName>
</protein>
<gene>
    <name type="primary">omp2a</name>
    <name type="ordered locus">BAB1_0659</name>
</gene>